<name>COAE_XYLFT</name>
<proteinExistence type="inferred from homology"/>
<sequence>MSVYAVGLTGGVACGKSLLAQLFEALNTTVVDADTIARQVVEPGPVLNCIVARFGSKILRADGCLDRRFLRQRVFADVAERKALEAIVHPVIRARLKQAAAAAAGPYVLVVIPLLAEAGGRIGYPWLQRILVVDAIPEVQHARLMQRDSIDAEQASLMIAAQIGRKERLAIADDIVFNDGDPAHLGGQVCNLDARYRALASVFSDVD</sequence>
<gene>
    <name evidence="1" type="primary">coaE</name>
    <name type="ordered locus">PD_1921</name>
</gene>
<dbReference type="EC" id="2.7.1.24" evidence="1"/>
<dbReference type="EMBL" id="AE009442">
    <property type="protein sequence ID" value="AAO29751.1"/>
    <property type="status" value="ALT_INIT"/>
    <property type="molecule type" value="Genomic_DNA"/>
</dbReference>
<dbReference type="RefSeq" id="WP_004090385.1">
    <property type="nucleotide sequence ID" value="NC_004556.1"/>
</dbReference>
<dbReference type="SMR" id="Q87AA7"/>
<dbReference type="GeneID" id="93905782"/>
<dbReference type="KEGG" id="xft:PD_1921"/>
<dbReference type="HOGENOM" id="CLU_057180_1_2_6"/>
<dbReference type="UniPathway" id="UPA00241">
    <property type="reaction ID" value="UER00356"/>
</dbReference>
<dbReference type="Proteomes" id="UP000002516">
    <property type="component" value="Chromosome"/>
</dbReference>
<dbReference type="GO" id="GO:0005737">
    <property type="term" value="C:cytoplasm"/>
    <property type="evidence" value="ECO:0007669"/>
    <property type="project" value="UniProtKB-SubCell"/>
</dbReference>
<dbReference type="GO" id="GO:0005524">
    <property type="term" value="F:ATP binding"/>
    <property type="evidence" value="ECO:0007669"/>
    <property type="project" value="UniProtKB-UniRule"/>
</dbReference>
<dbReference type="GO" id="GO:0004140">
    <property type="term" value="F:dephospho-CoA kinase activity"/>
    <property type="evidence" value="ECO:0007669"/>
    <property type="project" value="UniProtKB-UniRule"/>
</dbReference>
<dbReference type="GO" id="GO:0015937">
    <property type="term" value="P:coenzyme A biosynthetic process"/>
    <property type="evidence" value="ECO:0007669"/>
    <property type="project" value="UniProtKB-UniRule"/>
</dbReference>
<dbReference type="CDD" id="cd02022">
    <property type="entry name" value="DPCK"/>
    <property type="match status" value="1"/>
</dbReference>
<dbReference type="Gene3D" id="3.40.50.300">
    <property type="entry name" value="P-loop containing nucleotide triphosphate hydrolases"/>
    <property type="match status" value="1"/>
</dbReference>
<dbReference type="HAMAP" id="MF_00376">
    <property type="entry name" value="Dephospho_CoA_kinase"/>
    <property type="match status" value="1"/>
</dbReference>
<dbReference type="InterPro" id="IPR001977">
    <property type="entry name" value="Depp_CoAkinase"/>
</dbReference>
<dbReference type="InterPro" id="IPR027417">
    <property type="entry name" value="P-loop_NTPase"/>
</dbReference>
<dbReference type="NCBIfam" id="TIGR00152">
    <property type="entry name" value="dephospho-CoA kinase"/>
    <property type="match status" value="1"/>
</dbReference>
<dbReference type="PANTHER" id="PTHR10695:SF46">
    <property type="entry name" value="BIFUNCTIONAL COENZYME A SYNTHASE-RELATED"/>
    <property type="match status" value="1"/>
</dbReference>
<dbReference type="PANTHER" id="PTHR10695">
    <property type="entry name" value="DEPHOSPHO-COA KINASE-RELATED"/>
    <property type="match status" value="1"/>
</dbReference>
<dbReference type="Pfam" id="PF01121">
    <property type="entry name" value="CoaE"/>
    <property type="match status" value="1"/>
</dbReference>
<dbReference type="SUPFAM" id="SSF52540">
    <property type="entry name" value="P-loop containing nucleoside triphosphate hydrolases"/>
    <property type="match status" value="1"/>
</dbReference>
<dbReference type="PROSITE" id="PS51219">
    <property type="entry name" value="DPCK"/>
    <property type="match status" value="1"/>
</dbReference>
<keyword id="KW-0067">ATP-binding</keyword>
<keyword id="KW-0173">Coenzyme A biosynthesis</keyword>
<keyword id="KW-0963">Cytoplasm</keyword>
<keyword id="KW-0418">Kinase</keyword>
<keyword id="KW-0547">Nucleotide-binding</keyword>
<keyword id="KW-1185">Reference proteome</keyword>
<keyword id="KW-0808">Transferase</keyword>
<organism>
    <name type="scientific">Xylella fastidiosa (strain Temecula1 / ATCC 700964)</name>
    <dbReference type="NCBI Taxonomy" id="183190"/>
    <lineage>
        <taxon>Bacteria</taxon>
        <taxon>Pseudomonadati</taxon>
        <taxon>Pseudomonadota</taxon>
        <taxon>Gammaproteobacteria</taxon>
        <taxon>Lysobacterales</taxon>
        <taxon>Lysobacteraceae</taxon>
        <taxon>Xylella</taxon>
    </lineage>
</organism>
<evidence type="ECO:0000255" key="1">
    <source>
        <dbReference type="HAMAP-Rule" id="MF_00376"/>
    </source>
</evidence>
<evidence type="ECO:0000305" key="2"/>
<reference key="1">
    <citation type="journal article" date="2003" name="J. Bacteriol.">
        <title>Comparative analyses of the complete genome sequences of Pierce's disease and citrus variegated chlorosis strains of Xylella fastidiosa.</title>
        <authorList>
            <person name="Van Sluys M.A."/>
            <person name="de Oliveira M.C."/>
            <person name="Monteiro-Vitorello C.B."/>
            <person name="Miyaki C.Y."/>
            <person name="Furlan L.R."/>
            <person name="Camargo L.E.A."/>
            <person name="da Silva A.C.R."/>
            <person name="Moon D.H."/>
            <person name="Takita M.A."/>
            <person name="Lemos E.G.M."/>
            <person name="Machado M.A."/>
            <person name="Ferro M.I.T."/>
            <person name="da Silva F.R."/>
            <person name="Goldman M.H.S."/>
            <person name="Goldman G.H."/>
            <person name="Lemos M.V.F."/>
            <person name="El-Dorry H."/>
            <person name="Tsai S.M."/>
            <person name="Carrer H."/>
            <person name="Carraro D.M."/>
            <person name="de Oliveira R.C."/>
            <person name="Nunes L.R."/>
            <person name="Siqueira W.J."/>
            <person name="Coutinho L.L."/>
            <person name="Kimura E.T."/>
            <person name="Ferro E.S."/>
            <person name="Harakava R."/>
            <person name="Kuramae E.E."/>
            <person name="Marino C.L."/>
            <person name="Giglioti E."/>
            <person name="Abreu I.L."/>
            <person name="Alves L.M.C."/>
            <person name="do Amaral A.M."/>
            <person name="Baia G.S."/>
            <person name="Blanco S.R."/>
            <person name="Brito M.S."/>
            <person name="Cannavan F.S."/>
            <person name="Celestino A.V."/>
            <person name="da Cunha A.F."/>
            <person name="Fenille R.C."/>
            <person name="Ferro J.A."/>
            <person name="Formighieri E.F."/>
            <person name="Kishi L.T."/>
            <person name="Leoni S.G."/>
            <person name="Oliveira A.R."/>
            <person name="Rosa V.E. Jr."/>
            <person name="Sassaki F.T."/>
            <person name="Sena J.A.D."/>
            <person name="de Souza A.A."/>
            <person name="Truffi D."/>
            <person name="Tsukumo F."/>
            <person name="Yanai G.M."/>
            <person name="Zaros L.G."/>
            <person name="Civerolo E.L."/>
            <person name="Simpson A.J.G."/>
            <person name="Almeida N.F. Jr."/>
            <person name="Setubal J.C."/>
            <person name="Kitajima J.P."/>
        </authorList>
    </citation>
    <scope>NUCLEOTIDE SEQUENCE [LARGE SCALE GENOMIC DNA]</scope>
    <source>
        <strain>Temecula1 / ATCC 700964</strain>
    </source>
</reference>
<accession>Q87AA7</accession>
<comment type="function">
    <text evidence="1">Catalyzes the phosphorylation of the 3'-hydroxyl group of dephosphocoenzyme A to form coenzyme A.</text>
</comment>
<comment type="catalytic activity">
    <reaction evidence="1">
        <text>3'-dephospho-CoA + ATP = ADP + CoA + H(+)</text>
        <dbReference type="Rhea" id="RHEA:18245"/>
        <dbReference type="ChEBI" id="CHEBI:15378"/>
        <dbReference type="ChEBI" id="CHEBI:30616"/>
        <dbReference type="ChEBI" id="CHEBI:57287"/>
        <dbReference type="ChEBI" id="CHEBI:57328"/>
        <dbReference type="ChEBI" id="CHEBI:456216"/>
        <dbReference type="EC" id="2.7.1.24"/>
    </reaction>
</comment>
<comment type="pathway">
    <text evidence="1">Cofactor biosynthesis; coenzyme A biosynthesis; CoA from (R)-pantothenate: step 5/5.</text>
</comment>
<comment type="subcellular location">
    <subcellularLocation>
        <location evidence="1">Cytoplasm</location>
    </subcellularLocation>
</comment>
<comment type="similarity">
    <text evidence="1">Belongs to the CoaE family.</text>
</comment>
<comment type="sequence caution" evidence="2">
    <conflict type="erroneous initiation">
        <sequence resource="EMBL-CDS" id="AAO29751"/>
    </conflict>
</comment>
<protein>
    <recommendedName>
        <fullName evidence="1">Dephospho-CoA kinase</fullName>
        <ecNumber evidence="1">2.7.1.24</ecNumber>
    </recommendedName>
    <alternativeName>
        <fullName evidence="1">Dephosphocoenzyme A kinase</fullName>
    </alternativeName>
</protein>
<feature type="chain" id="PRO_0000173037" description="Dephospho-CoA kinase">
    <location>
        <begin position="1"/>
        <end position="207"/>
    </location>
</feature>
<feature type="domain" description="DPCK" evidence="1">
    <location>
        <begin position="5"/>
        <end position="203"/>
    </location>
</feature>
<feature type="binding site" evidence="1">
    <location>
        <begin position="13"/>
        <end position="18"/>
    </location>
    <ligand>
        <name>ATP</name>
        <dbReference type="ChEBI" id="CHEBI:30616"/>
    </ligand>
</feature>